<dbReference type="EMBL" id="AF525166">
    <property type="protein sequence ID" value="AAM91939.1"/>
    <property type="molecule type" value="Genomic_DNA"/>
</dbReference>
<dbReference type="BMRB" id="Q8NJR6"/>
<dbReference type="SMR" id="Q8NJR6"/>
<dbReference type="GO" id="GO:0003714">
    <property type="term" value="F:transcription corepressor activity"/>
    <property type="evidence" value="ECO:0007669"/>
    <property type="project" value="InterPro"/>
</dbReference>
<dbReference type="GO" id="GO:0042128">
    <property type="term" value="P:nitrate assimilation"/>
    <property type="evidence" value="ECO:0007669"/>
    <property type="project" value="UniProtKB-KW"/>
</dbReference>
<dbReference type="GO" id="GO:0006808">
    <property type="term" value="P:regulation of nitrogen utilization"/>
    <property type="evidence" value="ECO:0007669"/>
    <property type="project" value="InterPro"/>
</dbReference>
<dbReference type="CDD" id="cd10293">
    <property type="entry name" value="GST_C_Ure2p"/>
    <property type="match status" value="1"/>
</dbReference>
<dbReference type="CDD" id="cd03048">
    <property type="entry name" value="GST_N_Ure2p_like"/>
    <property type="match status" value="1"/>
</dbReference>
<dbReference type="FunFam" id="3.40.30.10:FF:000222">
    <property type="entry name" value="Protein URE2"/>
    <property type="match status" value="1"/>
</dbReference>
<dbReference type="FunFam" id="1.20.1050.10:FF:000034">
    <property type="entry name" value="Transcriptional regulator URE2"/>
    <property type="match status" value="1"/>
</dbReference>
<dbReference type="Gene3D" id="1.20.1050.10">
    <property type="match status" value="1"/>
</dbReference>
<dbReference type="Gene3D" id="3.40.30.10">
    <property type="entry name" value="Glutaredoxin"/>
    <property type="match status" value="1"/>
</dbReference>
<dbReference type="InterPro" id="IPR010987">
    <property type="entry name" value="Glutathione-S-Trfase_C-like"/>
</dbReference>
<dbReference type="InterPro" id="IPR036282">
    <property type="entry name" value="Glutathione-S-Trfase_C_sf"/>
</dbReference>
<dbReference type="InterPro" id="IPR040079">
    <property type="entry name" value="Glutathione_S-Trfase"/>
</dbReference>
<dbReference type="InterPro" id="IPR004045">
    <property type="entry name" value="Glutathione_S-Trfase_N"/>
</dbReference>
<dbReference type="InterPro" id="IPR004046">
    <property type="entry name" value="GST_C"/>
</dbReference>
<dbReference type="InterPro" id="IPR036249">
    <property type="entry name" value="Thioredoxin-like_sf"/>
</dbReference>
<dbReference type="InterPro" id="IPR017298">
    <property type="entry name" value="Ure2"/>
</dbReference>
<dbReference type="PANTHER" id="PTHR44051">
    <property type="entry name" value="GLUTATHIONE S-TRANSFERASE-RELATED"/>
    <property type="match status" value="1"/>
</dbReference>
<dbReference type="PANTHER" id="PTHR44051:SF3">
    <property type="entry name" value="TRANSCRIPTIONAL REGULATOR URE2"/>
    <property type="match status" value="1"/>
</dbReference>
<dbReference type="Pfam" id="PF00043">
    <property type="entry name" value="GST_C"/>
    <property type="match status" value="1"/>
</dbReference>
<dbReference type="Pfam" id="PF02798">
    <property type="entry name" value="GST_N"/>
    <property type="match status" value="1"/>
</dbReference>
<dbReference type="PIRSF" id="PIRSF037861">
    <property type="entry name" value="Prion_URE2"/>
    <property type="match status" value="1"/>
</dbReference>
<dbReference type="SFLD" id="SFLDS00019">
    <property type="entry name" value="Glutathione_Transferase_(cytos"/>
    <property type="match status" value="1"/>
</dbReference>
<dbReference type="SFLD" id="SFLDG00358">
    <property type="entry name" value="Main_(cytGST)"/>
    <property type="match status" value="1"/>
</dbReference>
<dbReference type="SUPFAM" id="SSF47616">
    <property type="entry name" value="GST C-terminal domain-like"/>
    <property type="match status" value="1"/>
</dbReference>
<dbReference type="SUPFAM" id="SSF52833">
    <property type="entry name" value="Thioredoxin-like"/>
    <property type="match status" value="1"/>
</dbReference>
<dbReference type="PROSITE" id="PS50405">
    <property type="entry name" value="GST_CTER"/>
    <property type="match status" value="1"/>
</dbReference>
<dbReference type="PROSITE" id="PS50404">
    <property type="entry name" value="GST_NTER"/>
    <property type="match status" value="1"/>
</dbReference>
<organism>
    <name type="scientific">Saccharomyces bayanus</name>
    <name type="common">Yeast</name>
    <name type="synonym">Saccharomyces uvarum x Saccharomyces eubayanus</name>
    <dbReference type="NCBI Taxonomy" id="4931"/>
    <lineage>
        <taxon>Eukaryota</taxon>
        <taxon>Fungi</taxon>
        <taxon>Dikarya</taxon>
        <taxon>Ascomycota</taxon>
        <taxon>Saccharomycotina</taxon>
        <taxon>Saccharomycetes</taxon>
        <taxon>Saccharomycetales</taxon>
        <taxon>Saccharomycetaceae</taxon>
        <taxon>Saccharomyces</taxon>
    </lineage>
</organism>
<sequence length="345" mass="39297">MMNNNGNQVSNLSNALRQVNIGNRNSNTTTDQSNINFEFPSGVNSNNSVQNSNNGRNGTQNNNNENSIKDTIEQHRQQQQAFSDMSHVEYSRITKFFQEQPLEGYTLFSHRSAPNGFKVAIVLSELGFHYNTIFLDFNLGEHRAPEFVSVNPNARVPALIDHNMDNLSIWESGAILLHLVNKYYKETGNPLLWSDDLADQSQINAWLFFQTSGHAPMIGQALHFRYFHSQKIASAVERYTDEVRRVYGVVEMALAERREALVMELDTENAAAYSAGTTPMSQSRFFDYPVWLVGDKLTIADLAFVPWNNVVDRIGINVKIEFPEVYKWTKHMMRRPAVIKALRGE</sequence>
<evidence type="ECO:0000250" key="1"/>
<evidence type="ECO:0000256" key="2">
    <source>
        <dbReference type="SAM" id="MobiDB-lite"/>
    </source>
</evidence>
<evidence type="ECO:0000305" key="3"/>
<protein>
    <recommendedName>
        <fullName>Protein URE2</fullName>
    </recommendedName>
</protein>
<gene>
    <name type="primary">URE2</name>
</gene>
<feature type="chain" id="PRO_0000186010" description="Protein URE2">
    <location>
        <begin position="1"/>
        <end position="345"/>
    </location>
</feature>
<feature type="domain" description="GST N-terminal">
    <location>
        <begin position="103"/>
        <end position="187"/>
    </location>
</feature>
<feature type="domain" description="GST C-terminal">
    <location>
        <begin position="196"/>
        <end position="345"/>
    </location>
</feature>
<feature type="region of interest" description="Disordered" evidence="2">
    <location>
        <begin position="22"/>
        <end position="66"/>
    </location>
</feature>
<feature type="compositionally biased region" description="Polar residues" evidence="2">
    <location>
        <begin position="22"/>
        <end position="36"/>
    </location>
</feature>
<feature type="compositionally biased region" description="Low complexity" evidence="2">
    <location>
        <begin position="41"/>
        <end position="66"/>
    </location>
</feature>
<comment type="function">
    <text evidence="1">Plays an important role in the cellular response to the nitrogen source. URE2 gene plays a major part in the repression of GLN1 and GDH2 genes by glutamine, and is required for the inactivation of glutamine synthetase. URE2 gene product may catalytically inactivate GLN3 in response to an increase in the intracellular concentration of glutamine (By similarity).</text>
</comment>
<comment type="subunit">
    <text evidence="1">Homodimer.</text>
</comment>
<comment type="similarity">
    <text evidence="3">Belongs to the GST superfamily.</text>
</comment>
<reference key="1">
    <citation type="journal article" date="2002" name="Proc. Natl. Acad. Sci. U.S.A.">
        <title>Conservation of a portion of the S. cerevisiae Ure2p prion domain that interacts with the full-length protein.</title>
        <authorList>
            <person name="Edskes H.K."/>
            <person name="Wickner R.B."/>
        </authorList>
    </citation>
    <scope>NUCLEOTIDE SEQUENCE [GENOMIC DNA]</scope>
    <source>
        <strain>YJM 562</strain>
    </source>
</reference>
<name>URE2_SACBA</name>
<proteinExistence type="inferred from homology"/>
<keyword id="KW-0534">Nitrate assimilation</keyword>
<accession>Q8NJR6</accession>